<organism>
    <name type="scientific">Caenorhabditis briggsae</name>
    <dbReference type="NCBI Taxonomy" id="6238"/>
    <lineage>
        <taxon>Eukaryota</taxon>
        <taxon>Metazoa</taxon>
        <taxon>Ecdysozoa</taxon>
        <taxon>Nematoda</taxon>
        <taxon>Chromadorea</taxon>
        <taxon>Rhabditida</taxon>
        <taxon>Rhabditina</taxon>
        <taxon>Rhabditomorpha</taxon>
        <taxon>Rhabditoidea</taxon>
        <taxon>Rhabditidae</taxon>
        <taxon>Peloderinae</taxon>
        <taxon>Caenorhabditis</taxon>
    </lineage>
</organism>
<feature type="signal peptide" evidence="2">
    <location>
        <begin position="1"/>
        <end position="22"/>
    </location>
</feature>
<feature type="propeptide" id="PRO_0000355585" evidence="2">
    <location>
        <begin position="23"/>
        <end position="48"/>
    </location>
</feature>
<feature type="peptide" id="PRO_0000355586" description="VPSAGDMMVRF-amide" evidence="2">
    <location>
        <begin position="51"/>
        <end position="61"/>
    </location>
</feature>
<feature type="propeptide" id="PRO_0000355587" evidence="2">
    <location>
        <begin position="65"/>
        <end position="66"/>
    </location>
</feature>
<feature type="modified residue" description="Phenylalanine amide" evidence="2">
    <location>
        <position position="61"/>
    </location>
</feature>
<dbReference type="EMBL" id="HE601055">
    <property type="protein sequence ID" value="CAP33514.1"/>
    <property type="molecule type" value="Genomic_DNA"/>
</dbReference>
<dbReference type="FunCoup" id="A8XLL0">
    <property type="interactions" value="775"/>
</dbReference>
<dbReference type="STRING" id="6238.A8XLL0"/>
<dbReference type="EnsemblMetazoa" id="CBG15244.1">
    <property type="protein sequence ID" value="CBG15244.1"/>
    <property type="gene ID" value="WBGene00035558"/>
</dbReference>
<dbReference type="KEGG" id="cbr:CBG_15244"/>
<dbReference type="CTD" id="8584953"/>
<dbReference type="WormBase" id="CBG15244">
    <property type="protein sequence ID" value="CBP09856"/>
    <property type="gene ID" value="WBGene00035558"/>
    <property type="gene designation" value="Cbr-flp-24"/>
</dbReference>
<dbReference type="eggNOG" id="KOG3216">
    <property type="taxonomic scope" value="Eukaryota"/>
</dbReference>
<dbReference type="HOGENOM" id="CLU_2833461_0_0_1"/>
<dbReference type="InParanoid" id="A8XLL0"/>
<dbReference type="OMA" id="AQWGEIP"/>
<dbReference type="OrthoDB" id="5818620at2759"/>
<dbReference type="Proteomes" id="UP000008549">
    <property type="component" value="Unassembled WGS sequence"/>
</dbReference>
<dbReference type="GO" id="GO:0005576">
    <property type="term" value="C:extracellular region"/>
    <property type="evidence" value="ECO:0007669"/>
    <property type="project" value="UniProtKB-SubCell"/>
</dbReference>
<dbReference type="GO" id="GO:0007218">
    <property type="term" value="P:neuropeptide signaling pathway"/>
    <property type="evidence" value="ECO:0007669"/>
    <property type="project" value="UniProtKB-KW"/>
</dbReference>
<sequence length="66" mass="7396">MSRTSIILVLAIFVAIAAIAQCRNIQYDVDEISPEAAFRYAQWGEIPHKRVPSAGDMMVRFGKRSV</sequence>
<reference evidence="3" key="1">
    <citation type="journal article" date="2003" name="PLoS Biol.">
        <title>The genome sequence of Caenorhabditis briggsae: a platform for comparative genomics.</title>
        <authorList>
            <person name="Stein L.D."/>
            <person name="Bao Z."/>
            <person name="Blasiar D."/>
            <person name="Blumenthal T."/>
            <person name="Brent M.R."/>
            <person name="Chen N."/>
            <person name="Chinwalla A."/>
            <person name="Clarke L."/>
            <person name="Clee C."/>
            <person name="Coghlan A."/>
            <person name="Coulson A."/>
            <person name="D'Eustachio P."/>
            <person name="Fitch D.H.A."/>
            <person name="Fulton L.A."/>
            <person name="Fulton R.E."/>
            <person name="Griffiths-Jones S."/>
            <person name="Harris T.W."/>
            <person name="Hillier L.W."/>
            <person name="Kamath R."/>
            <person name="Kuwabara P.E."/>
            <person name="Mardis E.R."/>
            <person name="Marra M.A."/>
            <person name="Miner T.L."/>
            <person name="Minx P."/>
            <person name="Mullikin J.C."/>
            <person name="Plumb R.W."/>
            <person name="Rogers J."/>
            <person name="Schein J.E."/>
            <person name="Sohrmann M."/>
            <person name="Spieth J."/>
            <person name="Stajich J.E."/>
            <person name="Wei C."/>
            <person name="Willey D."/>
            <person name="Wilson R.K."/>
            <person name="Durbin R.M."/>
            <person name="Waterston R.H."/>
        </authorList>
    </citation>
    <scope>NUCLEOTIDE SEQUENCE [LARGE SCALE GENOMIC DNA]</scope>
    <source>
        <strain evidence="3">AF16</strain>
    </source>
</reference>
<proteinExistence type="inferred from homology"/>
<protein>
    <recommendedName>
        <fullName evidence="1">FMRFamide-like neuropeptides 24</fullName>
    </recommendedName>
    <component>
        <recommendedName>
            <fullName evidence="1">VPSAGDMMVRF-amide</fullName>
        </recommendedName>
    </component>
</protein>
<name>FLP24_CAEBR</name>
<accession>A8XLL0</accession>
<evidence type="ECO:0000250" key="1">
    <source>
        <dbReference type="UniProtKB" id="O17058"/>
    </source>
</evidence>
<evidence type="ECO:0000255" key="2"/>
<evidence type="ECO:0000312" key="3">
    <source>
        <dbReference type="EMBL" id="CAP33514.1"/>
    </source>
</evidence>
<gene>
    <name evidence="3" type="primary">flp-24</name>
    <name type="ORF">CBG15244</name>
</gene>
<keyword id="KW-0027">Amidation</keyword>
<keyword id="KW-0165">Cleavage on pair of basic residues</keyword>
<keyword id="KW-0527">Neuropeptide</keyword>
<keyword id="KW-1185">Reference proteome</keyword>
<keyword id="KW-0964">Secreted</keyword>
<keyword id="KW-0732">Signal</keyword>
<comment type="function">
    <text evidence="1">FMRFamides and FMRFamide-like peptides are neuropeptides.</text>
</comment>
<comment type="subcellular location">
    <subcellularLocation>
        <location evidence="1">Secreted</location>
    </subcellularLocation>
</comment>
<comment type="similarity">
    <text evidence="2">Belongs to the FARP (FMRFamide related peptide) family.</text>
</comment>